<dbReference type="EMBL" id="CP000880">
    <property type="protein sequence ID" value="ABX23931.1"/>
    <property type="molecule type" value="Genomic_DNA"/>
</dbReference>
<dbReference type="SMR" id="A9MMF2"/>
<dbReference type="STRING" id="41514.SARI_04142"/>
<dbReference type="KEGG" id="ses:SARI_04142"/>
<dbReference type="HOGENOM" id="CLU_056916_0_0_6"/>
<dbReference type="Proteomes" id="UP000002084">
    <property type="component" value="Chromosome"/>
</dbReference>
<dbReference type="GO" id="GO:0005886">
    <property type="term" value="C:plasma membrane"/>
    <property type="evidence" value="ECO:0007669"/>
    <property type="project" value="UniProtKB-SubCell"/>
</dbReference>
<dbReference type="GO" id="GO:0022857">
    <property type="term" value="F:transmembrane transporter activity"/>
    <property type="evidence" value="ECO:0007669"/>
    <property type="project" value="InterPro"/>
</dbReference>
<dbReference type="FunFam" id="1.20.1250.20:FF:000032">
    <property type="entry name" value="Protein TsgA"/>
    <property type="match status" value="1"/>
</dbReference>
<dbReference type="FunFam" id="1.20.1250.20:FF:000052">
    <property type="entry name" value="Protein TsgA"/>
    <property type="match status" value="1"/>
</dbReference>
<dbReference type="Gene3D" id="1.20.1250.20">
    <property type="entry name" value="MFS general substrate transporter like domains"/>
    <property type="match status" value="2"/>
</dbReference>
<dbReference type="HAMAP" id="MF_01044">
    <property type="entry name" value="MFS_TsgA"/>
    <property type="match status" value="1"/>
</dbReference>
<dbReference type="InterPro" id="IPR011701">
    <property type="entry name" value="MFS"/>
</dbReference>
<dbReference type="InterPro" id="IPR020846">
    <property type="entry name" value="MFS_dom"/>
</dbReference>
<dbReference type="InterPro" id="IPR036259">
    <property type="entry name" value="MFS_trans_sf"/>
</dbReference>
<dbReference type="InterPro" id="IPR023528">
    <property type="entry name" value="MFS_TsgA"/>
</dbReference>
<dbReference type="InterPro" id="IPR050375">
    <property type="entry name" value="MFS_TsgA-like"/>
</dbReference>
<dbReference type="NCBIfam" id="NF002982">
    <property type="entry name" value="PRK03699.1"/>
    <property type="match status" value="1"/>
</dbReference>
<dbReference type="PANTHER" id="PTHR43702">
    <property type="entry name" value="L-FUCOSE-PROTON SYMPORTER"/>
    <property type="match status" value="1"/>
</dbReference>
<dbReference type="PANTHER" id="PTHR43702:SF3">
    <property type="entry name" value="PROTEIN TSGA"/>
    <property type="match status" value="1"/>
</dbReference>
<dbReference type="Pfam" id="PF07690">
    <property type="entry name" value="MFS_1"/>
    <property type="match status" value="1"/>
</dbReference>
<dbReference type="SUPFAM" id="SSF103473">
    <property type="entry name" value="MFS general substrate transporter"/>
    <property type="match status" value="1"/>
</dbReference>
<dbReference type="PROSITE" id="PS50850">
    <property type="entry name" value="MFS"/>
    <property type="match status" value="1"/>
</dbReference>
<comment type="subcellular location">
    <subcellularLocation>
        <location evidence="1">Cell inner membrane</location>
        <topology evidence="1">Multi-pass membrane protein</topology>
    </subcellularLocation>
</comment>
<comment type="similarity">
    <text evidence="1">Belongs to the major facilitator superfamily. TsgA family.</text>
</comment>
<reference key="1">
    <citation type="submission" date="2007-11" db="EMBL/GenBank/DDBJ databases">
        <authorList>
            <consortium name="The Salmonella enterica serovar Arizonae Genome Sequencing Project"/>
            <person name="McClelland M."/>
            <person name="Sanderson E.K."/>
            <person name="Porwollik S."/>
            <person name="Spieth J."/>
            <person name="Clifton W.S."/>
            <person name="Fulton R."/>
            <person name="Chunyan W."/>
            <person name="Wollam A."/>
            <person name="Shah N."/>
            <person name="Pepin K."/>
            <person name="Bhonagiri V."/>
            <person name="Nash W."/>
            <person name="Johnson M."/>
            <person name="Thiruvilangam P."/>
            <person name="Wilson R."/>
        </authorList>
    </citation>
    <scope>NUCLEOTIDE SEQUENCE [LARGE SCALE GENOMIC DNA]</scope>
    <source>
        <strain>ATCC BAA-731 / CDC346-86 / RSK2980</strain>
    </source>
</reference>
<name>TSGA_SALAR</name>
<protein>
    <recommendedName>
        <fullName evidence="1">Protein TsgA</fullName>
    </recommendedName>
</protein>
<accession>A9MMF2</accession>
<organism>
    <name type="scientific">Salmonella arizonae (strain ATCC BAA-731 / CDC346-86 / RSK2980)</name>
    <dbReference type="NCBI Taxonomy" id="41514"/>
    <lineage>
        <taxon>Bacteria</taxon>
        <taxon>Pseudomonadati</taxon>
        <taxon>Pseudomonadota</taxon>
        <taxon>Gammaproteobacteria</taxon>
        <taxon>Enterobacterales</taxon>
        <taxon>Enterobacteriaceae</taxon>
        <taxon>Salmonella</taxon>
    </lineage>
</organism>
<sequence>MTNSNRIKLTWISFLSYALTGALVIVTGMVMGNIADYFHLPVSNMSNTFTFLNAGILISIFLNAWLMEIVPLKTQLRFGFILMILAVAGLMLSHSLALFSAAMFVLGLVSGITMSIGTFLITQLYEGRQRGSRLLFTDSFFSMAGMVFPMVAAFLLARSIEWYWVYACIGLVYLAIFILTFGCEFPALGKHAQHSQAPAAKEKWGIGVLFLAVAALCYILGQLGFISWVPEYAKGLGMSLNDAGALVSDFWMSYMFGMWAFSFILRFFDLQRILTVLAGMATVLMYLFITGTQAHMPWFILTLGFFSSAIYTSIITLGSQQTKVASPKLVNFILTCGTIGTMLTFVVTGPIVAYSGPQAALLTANGLYAVVFVMCFALGFVSRHRQHSASAAH</sequence>
<feature type="chain" id="PRO_1000084405" description="Protein TsgA">
    <location>
        <begin position="1"/>
        <end position="393"/>
    </location>
</feature>
<feature type="transmembrane region" description="Helical" evidence="1">
    <location>
        <begin position="11"/>
        <end position="31"/>
    </location>
</feature>
<feature type="transmembrane region" description="Helical" evidence="1">
    <location>
        <begin position="51"/>
        <end position="71"/>
    </location>
</feature>
<feature type="transmembrane region" description="Helical" evidence="1">
    <location>
        <begin position="78"/>
        <end position="98"/>
    </location>
</feature>
<feature type="transmembrane region" description="Helical" evidence="1">
    <location>
        <begin position="101"/>
        <end position="121"/>
    </location>
</feature>
<feature type="transmembrane region" description="Helical" evidence="1">
    <location>
        <begin position="134"/>
        <end position="154"/>
    </location>
</feature>
<feature type="transmembrane region" description="Helical" evidence="1">
    <location>
        <begin position="162"/>
        <end position="182"/>
    </location>
</feature>
<feature type="transmembrane region" description="Helical" evidence="1">
    <location>
        <begin position="206"/>
        <end position="226"/>
    </location>
</feature>
<feature type="transmembrane region" description="Helical" evidence="1">
    <location>
        <begin position="245"/>
        <end position="265"/>
    </location>
</feature>
<feature type="transmembrane region" description="Helical" evidence="1">
    <location>
        <begin position="273"/>
        <end position="293"/>
    </location>
</feature>
<feature type="transmembrane region" description="Helical" evidence="1">
    <location>
        <begin position="298"/>
        <end position="318"/>
    </location>
</feature>
<feature type="transmembrane region" description="Helical" evidence="1">
    <location>
        <begin position="332"/>
        <end position="352"/>
    </location>
</feature>
<feature type="transmembrane region" description="Helical" evidence="1">
    <location>
        <begin position="361"/>
        <end position="381"/>
    </location>
</feature>
<gene>
    <name evidence="1" type="primary">tsgA</name>
    <name type="ordered locus">SARI_04142</name>
</gene>
<evidence type="ECO:0000255" key="1">
    <source>
        <dbReference type="HAMAP-Rule" id="MF_01044"/>
    </source>
</evidence>
<keyword id="KW-0997">Cell inner membrane</keyword>
<keyword id="KW-1003">Cell membrane</keyword>
<keyword id="KW-0472">Membrane</keyword>
<keyword id="KW-1185">Reference proteome</keyword>
<keyword id="KW-0812">Transmembrane</keyword>
<keyword id="KW-1133">Transmembrane helix</keyword>
<proteinExistence type="inferred from homology"/>